<feature type="chain" id="PRO_0000305739" description="Small ribosomal subunit protein uS8">
    <location>
        <begin position="1"/>
        <end position="131"/>
    </location>
</feature>
<evidence type="ECO:0000255" key="1">
    <source>
        <dbReference type="HAMAP-Rule" id="MF_01302"/>
    </source>
</evidence>
<evidence type="ECO:0000305" key="2"/>
<proteinExistence type="inferred from homology"/>
<dbReference type="EMBL" id="CP000572">
    <property type="protein sequence ID" value="ABN91672.1"/>
    <property type="molecule type" value="Genomic_DNA"/>
</dbReference>
<dbReference type="RefSeq" id="WP_004185153.1">
    <property type="nucleotide sequence ID" value="NC_009076.1"/>
</dbReference>
<dbReference type="SMR" id="A3P099"/>
<dbReference type="GeneID" id="93061818"/>
<dbReference type="KEGG" id="bpl:BURPS1106A_3790"/>
<dbReference type="HOGENOM" id="CLU_098428_0_0_4"/>
<dbReference type="Proteomes" id="UP000006738">
    <property type="component" value="Chromosome I"/>
</dbReference>
<dbReference type="GO" id="GO:1990904">
    <property type="term" value="C:ribonucleoprotein complex"/>
    <property type="evidence" value="ECO:0007669"/>
    <property type="project" value="UniProtKB-KW"/>
</dbReference>
<dbReference type="GO" id="GO:0005840">
    <property type="term" value="C:ribosome"/>
    <property type="evidence" value="ECO:0007669"/>
    <property type="project" value="UniProtKB-KW"/>
</dbReference>
<dbReference type="GO" id="GO:0019843">
    <property type="term" value="F:rRNA binding"/>
    <property type="evidence" value="ECO:0007669"/>
    <property type="project" value="UniProtKB-UniRule"/>
</dbReference>
<dbReference type="GO" id="GO:0003735">
    <property type="term" value="F:structural constituent of ribosome"/>
    <property type="evidence" value="ECO:0007669"/>
    <property type="project" value="InterPro"/>
</dbReference>
<dbReference type="GO" id="GO:0006412">
    <property type="term" value="P:translation"/>
    <property type="evidence" value="ECO:0007669"/>
    <property type="project" value="UniProtKB-UniRule"/>
</dbReference>
<dbReference type="FunFam" id="3.30.1370.30:FF:000003">
    <property type="entry name" value="30S ribosomal protein S8"/>
    <property type="match status" value="1"/>
</dbReference>
<dbReference type="FunFam" id="3.30.1490.10:FF:000001">
    <property type="entry name" value="30S ribosomal protein S8"/>
    <property type="match status" value="1"/>
</dbReference>
<dbReference type="Gene3D" id="3.30.1370.30">
    <property type="match status" value="1"/>
</dbReference>
<dbReference type="Gene3D" id="3.30.1490.10">
    <property type="match status" value="1"/>
</dbReference>
<dbReference type="HAMAP" id="MF_01302_B">
    <property type="entry name" value="Ribosomal_uS8_B"/>
    <property type="match status" value="1"/>
</dbReference>
<dbReference type="InterPro" id="IPR000630">
    <property type="entry name" value="Ribosomal_uS8"/>
</dbReference>
<dbReference type="InterPro" id="IPR047863">
    <property type="entry name" value="Ribosomal_uS8_CS"/>
</dbReference>
<dbReference type="InterPro" id="IPR035987">
    <property type="entry name" value="Ribosomal_uS8_sf"/>
</dbReference>
<dbReference type="NCBIfam" id="NF001109">
    <property type="entry name" value="PRK00136.1"/>
    <property type="match status" value="1"/>
</dbReference>
<dbReference type="PANTHER" id="PTHR11758">
    <property type="entry name" value="40S RIBOSOMAL PROTEIN S15A"/>
    <property type="match status" value="1"/>
</dbReference>
<dbReference type="Pfam" id="PF00410">
    <property type="entry name" value="Ribosomal_S8"/>
    <property type="match status" value="1"/>
</dbReference>
<dbReference type="SUPFAM" id="SSF56047">
    <property type="entry name" value="Ribosomal protein S8"/>
    <property type="match status" value="1"/>
</dbReference>
<dbReference type="PROSITE" id="PS00053">
    <property type="entry name" value="RIBOSOMAL_S8"/>
    <property type="match status" value="1"/>
</dbReference>
<sequence length="131" mass="14199">MSMSDPIADMLTRIRNAQMVEKVSVSMPSSKVKVAIAQVLKDEGYIDDFAVKADGAKAELNIALKYYAGRPVIERLERVSKPGLRVYRGRNEIPQVMNGLGVAIVSTPKGVMTDRKARATGVGGEVICYVA</sequence>
<name>RS8_BURP0</name>
<accession>A3P099</accession>
<comment type="function">
    <text evidence="1">One of the primary rRNA binding proteins, it binds directly to 16S rRNA central domain where it helps coordinate assembly of the platform of the 30S subunit.</text>
</comment>
<comment type="subunit">
    <text evidence="1">Part of the 30S ribosomal subunit. Contacts proteins S5 and S12.</text>
</comment>
<comment type="similarity">
    <text evidence="1">Belongs to the universal ribosomal protein uS8 family.</text>
</comment>
<gene>
    <name evidence="1" type="primary">rpsH</name>
    <name type="ordered locus">BURPS1106A_3790</name>
</gene>
<reference key="1">
    <citation type="journal article" date="2010" name="Genome Biol. Evol.">
        <title>Continuing evolution of Burkholderia mallei through genome reduction and large-scale rearrangements.</title>
        <authorList>
            <person name="Losada L."/>
            <person name="Ronning C.M."/>
            <person name="DeShazer D."/>
            <person name="Woods D."/>
            <person name="Fedorova N."/>
            <person name="Kim H.S."/>
            <person name="Shabalina S.A."/>
            <person name="Pearson T.R."/>
            <person name="Brinkac L."/>
            <person name="Tan P."/>
            <person name="Nandi T."/>
            <person name="Crabtree J."/>
            <person name="Badger J."/>
            <person name="Beckstrom-Sternberg S."/>
            <person name="Saqib M."/>
            <person name="Schutzer S.E."/>
            <person name="Keim P."/>
            <person name="Nierman W.C."/>
        </authorList>
    </citation>
    <scope>NUCLEOTIDE SEQUENCE [LARGE SCALE GENOMIC DNA]</scope>
    <source>
        <strain>1106a</strain>
    </source>
</reference>
<protein>
    <recommendedName>
        <fullName evidence="1">Small ribosomal subunit protein uS8</fullName>
    </recommendedName>
    <alternativeName>
        <fullName evidence="2">30S ribosomal protein S8</fullName>
    </alternativeName>
</protein>
<organism>
    <name type="scientific">Burkholderia pseudomallei (strain 1106a)</name>
    <dbReference type="NCBI Taxonomy" id="357348"/>
    <lineage>
        <taxon>Bacteria</taxon>
        <taxon>Pseudomonadati</taxon>
        <taxon>Pseudomonadota</taxon>
        <taxon>Betaproteobacteria</taxon>
        <taxon>Burkholderiales</taxon>
        <taxon>Burkholderiaceae</taxon>
        <taxon>Burkholderia</taxon>
        <taxon>pseudomallei group</taxon>
    </lineage>
</organism>
<keyword id="KW-0687">Ribonucleoprotein</keyword>
<keyword id="KW-0689">Ribosomal protein</keyword>
<keyword id="KW-0694">RNA-binding</keyword>
<keyword id="KW-0699">rRNA-binding</keyword>